<organism>
    <name type="scientific">Campylobacter fetus subsp. fetus (strain 82-40)</name>
    <dbReference type="NCBI Taxonomy" id="360106"/>
    <lineage>
        <taxon>Bacteria</taxon>
        <taxon>Pseudomonadati</taxon>
        <taxon>Campylobacterota</taxon>
        <taxon>Epsilonproteobacteria</taxon>
        <taxon>Campylobacterales</taxon>
        <taxon>Campylobacteraceae</taxon>
        <taxon>Campylobacter</taxon>
    </lineage>
</organism>
<gene>
    <name evidence="1" type="primary">ilvC</name>
    <name type="ordered locus">CFF8240_1127</name>
</gene>
<accession>A0RQ02</accession>
<reference key="1">
    <citation type="submission" date="2006-11" db="EMBL/GenBank/DDBJ databases">
        <title>Sequence of Campylobacter fetus subsp. fetus 82-40.</title>
        <authorList>
            <person name="Fouts D.E."/>
            <person name="Nelson K.E."/>
        </authorList>
    </citation>
    <scope>NUCLEOTIDE SEQUENCE [LARGE SCALE GENOMIC DNA]</scope>
    <source>
        <strain>82-40</strain>
    </source>
</reference>
<protein>
    <recommendedName>
        <fullName evidence="1">Ketol-acid reductoisomerase (NADP(+))</fullName>
        <shortName evidence="1">KARI</shortName>
        <ecNumber evidence="1">1.1.1.86</ecNumber>
    </recommendedName>
    <alternativeName>
        <fullName evidence="1">Acetohydroxy-acid isomeroreductase</fullName>
        <shortName evidence="1">AHIR</shortName>
    </alternativeName>
    <alternativeName>
        <fullName evidence="1">Alpha-keto-beta-hydroxylacyl reductoisomerase</fullName>
    </alternativeName>
    <alternativeName>
        <fullName evidence="1">Ketol-acid reductoisomerase type 1</fullName>
    </alternativeName>
    <alternativeName>
        <fullName evidence="1">Ketol-acid reductoisomerase type I</fullName>
    </alternativeName>
</protein>
<keyword id="KW-0028">Amino-acid biosynthesis</keyword>
<keyword id="KW-0100">Branched-chain amino acid biosynthesis</keyword>
<keyword id="KW-0460">Magnesium</keyword>
<keyword id="KW-0479">Metal-binding</keyword>
<keyword id="KW-0521">NADP</keyword>
<keyword id="KW-0560">Oxidoreductase</keyword>
<name>ILVC_CAMFF</name>
<comment type="function">
    <text evidence="1">Involved in the biosynthesis of branched-chain amino acids (BCAA). Catalyzes an alkyl-migration followed by a ketol-acid reduction of (S)-2-acetolactate (S2AL) to yield (R)-2,3-dihydroxy-isovalerate. In the isomerase reaction, S2AL is rearranged via a Mg-dependent methyl migration to produce 3-hydroxy-3-methyl-2-ketobutyrate (HMKB). In the reductase reaction, this 2-ketoacid undergoes a metal-dependent reduction by NADPH to yield (R)-2,3-dihydroxy-isovalerate.</text>
</comment>
<comment type="catalytic activity">
    <reaction evidence="1">
        <text>(2R)-2,3-dihydroxy-3-methylbutanoate + NADP(+) = (2S)-2-acetolactate + NADPH + H(+)</text>
        <dbReference type="Rhea" id="RHEA:22068"/>
        <dbReference type="ChEBI" id="CHEBI:15378"/>
        <dbReference type="ChEBI" id="CHEBI:49072"/>
        <dbReference type="ChEBI" id="CHEBI:57783"/>
        <dbReference type="ChEBI" id="CHEBI:58349"/>
        <dbReference type="ChEBI" id="CHEBI:58476"/>
        <dbReference type="EC" id="1.1.1.86"/>
    </reaction>
</comment>
<comment type="catalytic activity">
    <reaction evidence="1">
        <text>(2R,3R)-2,3-dihydroxy-3-methylpentanoate + NADP(+) = (S)-2-ethyl-2-hydroxy-3-oxobutanoate + NADPH + H(+)</text>
        <dbReference type="Rhea" id="RHEA:13493"/>
        <dbReference type="ChEBI" id="CHEBI:15378"/>
        <dbReference type="ChEBI" id="CHEBI:49256"/>
        <dbReference type="ChEBI" id="CHEBI:49258"/>
        <dbReference type="ChEBI" id="CHEBI:57783"/>
        <dbReference type="ChEBI" id="CHEBI:58349"/>
        <dbReference type="EC" id="1.1.1.86"/>
    </reaction>
</comment>
<comment type="cofactor">
    <cofactor evidence="1">
        <name>Mg(2+)</name>
        <dbReference type="ChEBI" id="CHEBI:18420"/>
    </cofactor>
    <text evidence="1">Binds 2 magnesium ions per subunit.</text>
</comment>
<comment type="pathway">
    <text evidence="1">Amino-acid biosynthesis; L-isoleucine biosynthesis; L-isoleucine from 2-oxobutanoate: step 2/4.</text>
</comment>
<comment type="pathway">
    <text evidence="1">Amino-acid biosynthesis; L-valine biosynthesis; L-valine from pyruvate: step 2/4.</text>
</comment>
<comment type="similarity">
    <text evidence="1">Belongs to the ketol-acid reductoisomerase family.</text>
</comment>
<evidence type="ECO:0000255" key="1">
    <source>
        <dbReference type="HAMAP-Rule" id="MF_00435"/>
    </source>
</evidence>
<evidence type="ECO:0000255" key="2">
    <source>
        <dbReference type="PROSITE-ProRule" id="PRU01197"/>
    </source>
</evidence>
<evidence type="ECO:0000255" key="3">
    <source>
        <dbReference type="PROSITE-ProRule" id="PRU01198"/>
    </source>
</evidence>
<dbReference type="EC" id="1.1.1.86" evidence="1"/>
<dbReference type="EMBL" id="CP000487">
    <property type="protein sequence ID" value="ABK81866.1"/>
    <property type="molecule type" value="Genomic_DNA"/>
</dbReference>
<dbReference type="RefSeq" id="WP_011732091.1">
    <property type="nucleotide sequence ID" value="NC_008599.1"/>
</dbReference>
<dbReference type="SMR" id="A0RQ02"/>
<dbReference type="GeneID" id="61064952"/>
<dbReference type="KEGG" id="cff:CFF8240_1127"/>
<dbReference type="PATRIC" id="fig|360106.6.peg.1100"/>
<dbReference type="eggNOG" id="COG0059">
    <property type="taxonomic scope" value="Bacteria"/>
</dbReference>
<dbReference type="HOGENOM" id="CLU_033821_0_1_7"/>
<dbReference type="UniPathway" id="UPA00047">
    <property type="reaction ID" value="UER00056"/>
</dbReference>
<dbReference type="UniPathway" id="UPA00049">
    <property type="reaction ID" value="UER00060"/>
</dbReference>
<dbReference type="Proteomes" id="UP000000760">
    <property type="component" value="Chromosome"/>
</dbReference>
<dbReference type="GO" id="GO:0005829">
    <property type="term" value="C:cytosol"/>
    <property type="evidence" value="ECO:0007669"/>
    <property type="project" value="TreeGrafter"/>
</dbReference>
<dbReference type="GO" id="GO:0004455">
    <property type="term" value="F:ketol-acid reductoisomerase activity"/>
    <property type="evidence" value="ECO:0007669"/>
    <property type="project" value="UniProtKB-UniRule"/>
</dbReference>
<dbReference type="GO" id="GO:0000287">
    <property type="term" value="F:magnesium ion binding"/>
    <property type="evidence" value="ECO:0007669"/>
    <property type="project" value="UniProtKB-UniRule"/>
</dbReference>
<dbReference type="GO" id="GO:0050661">
    <property type="term" value="F:NADP binding"/>
    <property type="evidence" value="ECO:0007669"/>
    <property type="project" value="InterPro"/>
</dbReference>
<dbReference type="GO" id="GO:0009097">
    <property type="term" value="P:isoleucine biosynthetic process"/>
    <property type="evidence" value="ECO:0007669"/>
    <property type="project" value="UniProtKB-UniRule"/>
</dbReference>
<dbReference type="GO" id="GO:0009099">
    <property type="term" value="P:L-valine biosynthetic process"/>
    <property type="evidence" value="ECO:0007669"/>
    <property type="project" value="UniProtKB-UniRule"/>
</dbReference>
<dbReference type="FunFam" id="3.40.50.720:FF:000023">
    <property type="entry name" value="Ketol-acid reductoisomerase (NADP(+))"/>
    <property type="match status" value="1"/>
</dbReference>
<dbReference type="Gene3D" id="6.10.240.10">
    <property type="match status" value="1"/>
</dbReference>
<dbReference type="Gene3D" id="3.40.50.720">
    <property type="entry name" value="NAD(P)-binding Rossmann-like Domain"/>
    <property type="match status" value="1"/>
</dbReference>
<dbReference type="HAMAP" id="MF_00435">
    <property type="entry name" value="IlvC"/>
    <property type="match status" value="1"/>
</dbReference>
<dbReference type="InterPro" id="IPR008927">
    <property type="entry name" value="6-PGluconate_DH-like_C_sf"/>
</dbReference>
<dbReference type="InterPro" id="IPR013023">
    <property type="entry name" value="KARI"/>
</dbReference>
<dbReference type="InterPro" id="IPR000506">
    <property type="entry name" value="KARI_C"/>
</dbReference>
<dbReference type="InterPro" id="IPR013116">
    <property type="entry name" value="KARI_N"/>
</dbReference>
<dbReference type="InterPro" id="IPR014359">
    <property type="entry name" value="KARI_prok"/>
</dbReference>
<dbReference type="InterPro" id="IPR036291">
    <property type="entry name" value="NAD(P)-bd_dom_sf"/>
</dbReference>
<dbReference type="NCBIfam" id="TIGR00465">
    <property type="entry name" value="ilvC"/>
    <property type="match status" value="1"/>
</dbReference>
<dbReference type="NCBIfam" id="NF004017">
    <property type="entry name" value="PRK05479.1"/>
    <property type="match status" value="1"/>
</dbReference>
<dbReference type="NCBIfam" id="NF009940">
    <property type="entry name" value="PRK13403.1"/>
    <property type="match status" value="1"/>
</dbReference>
<dbReference type="PANTHER" id="PTHR21371">
    <property type="entry name" value="KETOL-ACID REDUCTOISOMERASE, MITOCHONDRIAL"/>
    <property type="match status" value="1"/>
</dbReference>
<dbReference type="PANTHER" id="PTHR21371:SF1">
    <property type="entry name" value="KETOL-ACID REDUCTOISOMERASE, MITOCHONDRIAL"/>
    <property type="match status" value="1"/>
</dbReference>
<dbReference type="Pfam" id="PF01450">
    <property type="entry name" value="KARI_C"/>
    <property type="match status" value="1"/>
</dbReference>
<dbReference type="Pfam" id="PF07991">
    <property type="entry name" value="KARI_N"/>
    <property type="match status" value="1"/>
</dbReference>
<dbReference type="PIRSF" id="PIRSF000116">
    <property type="entry name" value="IlvC_gammaproteo"/>
    <property type="match status" value="1"/>
</dbReference>
<dbReference type="SUPFAM" id="SSF48179">
    <property type="entry name" value="6-phosphogluconate dehydrogenase C-terminal domain-like"/>
    <property type="match status" value="1"/>
</dbReference>
<dbReference type="SUPFAM" id="SSF51735">
    <property type="entry name" value="NAD(P)-binding Rossmann-fold domains"/>
    <property type="match status" value="1"/>
</dbReference>
<dbReference type="PROSITE" id="PS51851">
    <property type="entry name" value="KARI_C"/>
    <property type="match status" value="1"/>
</dbReference>
<dbReference type="PROSITE" id="PS51850">
    <property type="entry name" value="KARI_N"/>
    <property type="match status" value="1"/>
</dbReference>
<proteinExistence type="inferred from homology"/>
<feature type="chain" id="PRO_1000050495" description="Ketol-acid reductoisomerase (NADP(+))">
    <location>
        <begin position="1"/>
        <end position="340"/>
    </location>
</feature>
<feature type="domain" description="KARI N-terminal Rossmann" evidence="2">
    <location>
        <begin position="1"/>
        <end position="183"/>
    </location>
</feature>
<feature type="domain" description="KARI C-terminal knotted" evidence="3">
    <location>
        <begin position="184"/>
        <end position="329"/>
    </location>
</feature>
<feature type="active site" evidence="1">
    <location>
        <position position="109"/>
    </location>
</feature>
<feature type="binding site" evidence="1">
    <location>
        <begin position="26"/>
        <end position="29"/>
    </location>
    <ligand>
        <name>NADP(+)</name>
        <dbReference type="ChEBI" id="CHEBI:58349"/>
    </ligand>
</feature>
<feature type="binding site" evidence="1">
    <location>
        <position position="54"/>
    </location>
    <ligand>
        <name>NADP(+)</name>
        <dbReference type="ChEBI" id="CHEBI:58349"/>
    </ligand>
</feature>
<feature type="binding site" evidence="1">
    <location>
        <begin position="84"/>
        <end position="87"/>
    </location>
    <ligand>
        <name>NADP(+)</name>
        <dbReference type="ChEBI" id="CHEBI:58349"/>
    </ligand>
</feature>
<feature type="binding site" evidence="1">
    <location>
        <position position="135"/>
    </location>
    <ligand>
        <name>NADP(+)</name>
        <dbReference type="ChEBI" id="CHEBI:58349"/>
    </ligand>
</feature>
<feature type="binding site" evidence="1">
    <location>
        <position position="192"/>
    </location>
    <ligand>
        <name>Mg(2+)</name>
        <dbReference type="ChEBI" id="CHEBI:18420"/>
        <label>1</label>
    </ligand>
</feature>
<feature type="binding site" evidence="1">
    <location>
        <position position="192"/>
    </location>
    <ligand>
        <name>Mg(2+)</name>
        <dbReference type="ChEBI" id="CHEBI:18420"/>
        <label>2</label>
    </ligand>
</feature>
<feature type="binding site" evidence="1">
    <location>
        <position position="196"/>
    </location>
    <ligand>
        <name>Mg(2+)</name>
        <dbReference type="ChEBI" id="CHEBI:18420"/>
        <label>1</label>
    </ligand>
</feature>
<feature type="binding site" evidence="1">
    <location>
        <position position="228"/>
    </location>
    <ligand>
        <name>Mg(2+)</name>
        <dbReference type="ChEBI" id="CHEBI:18420"/>
        <label>2</label>
    </ligand>
</feature>
<feature type="binding site" evidence="1">
    <location>
        <position position="232"/>
    </location>
    <ligand>
        <name>Mg(2+)</name>
        <dbReference type="ChEBI" id="CHEBI:18420"/>
        <label>2</label>
    </ligand>
</feature>
<feature type="binding site" evidence="1">
    <location>
        <position position="253"/>
    </location>
    <ligand>
        <name>substrate</name>
    </ligand>
</feature>
<sequence>MAITVYYDKDCDLSLIRSKKVAIIGFGSQGHAHAENLRDSGVDVVVGLNPKGKSWAKAEAKGFKVMSVSEATKYADLIMILTPDEFQADIFKAEIEPNLSEGNAIAFGHGFNIHYGQIIPPKGIDCIMIAPKAPGHTVRNEFVNGGGIPDLIAVSQDATGKAKDLALSYASAIGGGRTGIIETTFKAETETDLFGEQAVLCGGLCALINAGFETLTEAGYEPEMAYFECLHEMKLIVDLIYQGGMADMRYSISNTAEYGDYVSGVRVVNESSKAAMKAILKEIQDGTFAKNFILERKAGYTKMNAERKISEASLLNKTGEKLRGMMPWINKGRLVNKDKN</sequence>